<accession>Q2P3K0</accession>
<name>HIS5_XANOM</name>
<sequence>MTDVALIDAGGANLGSVRYALERLGVEARVVRDAAGLQGAQRVILPGVGAAPEVMSRLRAQGLVAPLRELQVPLIGICLGMQLLFEHSEEGDVECLGLLPGIVRHMTPALGIRVPHMGWNRLVPMRESALLAGLPERASAYFVHGYAAPVTADTVAACDHGGLFTAIVQNGLRCGAQFHPERSADTGARILHNFLEMSFP</sequence>
<organism>
    <name type="scientific">Xanthomonas oryzae pv. oryzae (strain MAFF 311018)</name>
    <dbReference type="NCBI Taxonomy" id="342109"/>
    <lineage>
        <taxon>Bacteria</taxon>
        <taxon>Pseudomonadati</taxon>
        <taxon>Pseudomonadota</taxon>
        <taxon>Gammaproteobacteria</taxon>
        <taxon>Lysobacterales</taxon>
        <taxon>Lysobacteraceae</taxon>
        <taxon>Xanthomonas</taxon>
    </lineage>
</organism>
<reference key="1">
    <citation type="journal article" date="2005" name="Jpn. Agric. Res. Q.">
        <title>Genome sequence of Xanthomonas oryzae pv. oryzae suggests contribution of large numbers of effector genes and insertion sequences to its race diversity.</title>
        <authorList>
            <person name="Ochiai H."/>
            <person name="Inoue Y."/>
            <person name="Takeya M."/>
            <person name="Sasaki A."/>
            <person name="Kaku H."/>
        </authorList>
    </citation>
    <scope>NUCLEOTIDE SEQUENCE [LARGE SCALE GENOMIC DNA]</scope>
    <source>
        <strain>MAFF 311018</strain>
    </source>
</reference>
<dbReference type="EC" id="4.3.2.10" evidence="1"/>
<dbReference type="EC" id="3.5.1.2" evidence="1"/>
<dbReference type="EMBL" id="AP008229">
    <property type="protein sequence ID" value="BAE68877.1"/>
    <property type="molecule type" value="Genomic_DNA"/>
</dbReference>
<dbReference type="RefSeq" id="WP_011258945.1">
    <property type="nucleotide sequence ID" value="NC_007705.1"/>
</dbReference>
<dbReference type="SMR" id="Q2P3K0"/>
<dbReference type="KEGG" id="xom:XOO2122"/>
<dbReference type="HOGENOM" id="CLU_071837_0_0_6"/>
<dbReference type="UniPathway" id="UPA00031">
    <property type="reaction ID" value="UER00010"/>
</dbReference>
<dbReference type="GO" id="GO:0005737">
    <property type="term" value="C:cytoplasm"/>
    <property type="evidence" value="ECO:0007669"/>
    <property type="project" value="UniProtKB-SubCell"/>
</dbReference>
<dbReference type="GO" id="GO:0004359">
    <property type="term" value="F:glutaminase activity"/>
    <property type="evidence" value="ECO:0007669"/>
    <property type="project" value="UniProtKB-EC"/>
</dbReference>
<dbReference type="GO" id="GO:0000107">
    <property type="term" value="F:imidazoleglycerol-phosphate synthase activity"/>
    <property type="evidence" value="ECO:0007669"/>
    <property type="project" value="UniProtKB-UniRule"/>
</dbReference>
<dbReference type="GO" id="GO:0016829">
    <property type="term" value="F:lyase activity"/>
    <property type="evidence" value="ECO:0007669"/>
    <property type="project" value="UniProtKB-KW"/>
</dbReference>
<dbReference type="GO" id="GO:0000105">
    <property type="term" value="P:L-histidine biosynthetic process"/>
    <property type="evidence" value="ECO:0007669"/>
    <property type="project" value="UniProtKB-UniRule"/>
</dbReference>
<dbReference type="CDD" id="cd01748">
    <property type="entry name" value="GATase1_IGP_Synthase"/>
    <property type="match status" value="1"/>
</dbReference>
<dbReference type="FunFam" id="3.40.50.880:FF:000009">
    <property type="entry name" value="Imidazole glycerol phosphate synthase subunit HisH"/>
    <property type="match status" value="1"/>
</dbReference>
<dbReference type="Gene3D" id="3.40.50.880">
    <property type="match status" value="1"/>
</dbReference>
<dbReference type="HAMAP" id="MF_00278">
    <property type="entry name" value="HisH"/>
    <property type="match status" value="1"/>
</dbReference>
<dbReference type="InterPro" id="IPR029062">
    <property type="entry name" value="Class_I_gatase-like"/>
</dbReference>
<dbReference type="InterPro" id="IPR017926">
    <property type="entry name" value="GATASE"/>
</dbReference>
<dbReference type="InterPro" id="IPR010139">
    <property type="entry name" value="Imidazole-glycPsynth_HisH"/>
</dbReference>
<dbReference type="NCBIfam" id="TIGR01855">
    <property type="entry name" value="IMP_synth_hisH"/>
    <property type="match status" value="1"/>
</dbReference>
<dbReference type="PANTHER" id="PTHR42701">
    <property type="entry name" value="IMIDAZOLE GLYCEROL PHOSPHATE SYNTHASE SUBUNIT HISH"/>
    <property type="match status" value="1"/>
</dbReference>
<dbReference type="PANTHER" id="PTHR42701:SF1">
    <property type="entry name" value="IMIDAZOLE GLYCEROL PHOSPHATE SYNTHASE SUBUNIT HISH"/>
    <property type="match status" value="1"/>
</dbReference>
<dbReference type="Pfam" id="PF00117">
    <property type="entry name" value="GATase"/>
    <property type="match status" value="1"/>
</dbReference>
<dbReference type="PIRSF" id="PIRSF000495">
    <property type="entry name" value="Amidotransf_hisH"/>
    <property type="match status" value="1"/>
</dbReference>
<dbReference type="SUPFAM" id="SSF52317">
    <property type="entry name" value="Class I glutamine amidotransferase-like"/>
    <property type="match status" value="1"/>
</dbReference>
<dbReference type="PROSITE" id="PS51273">
    <property type="entry name" value="GATASE_TYPE_1"/>
    <property type="match status" value="1"/>
</dbReference>
<feature type="chain" id="PRO_0000231773" description="Imidazole glycerol phosphate synthase subunit HisH">
    <location>
        <begin position="1"/>
        <end position="200"/>
    </location>
</feature>
<feature type="domain" description="Glutamine amidotransferase type-1" evidence="1">
    <location>
        <begin position="3"/>
        <end position="200"/>
    </location>
</feature>
<feature type="active site" description="Nucleophile" evidence="1">
    <location>
        <position position="78"/>
    </location>
</feature>
<feature type="active site" evidence="1">
    <location>
        <position position="179"/>
    </location>
</feature>
<feature type="active site" evidence="1">
    <location>
        <position position="181"/>
    </location>
</feature>
<keyword id="KW-0028">Amino-acid biosynthesis</keyword>
<keyword id="KW-0963">Cytoplasm</keyword>
<keyword id="KW-0315">Glutamine amidotransferase</keyword>
<keyword id="KW-0368">Histidine biosynthesis</keyword>
<keyword id="KW-0378">Hydrolase</keyword>
<keyword id="KW-0456">Lyase</keyword>
<proteinExistence type="inferred from homology"/>
<comment type="function">
    <text evidence="1">IGPS catalyzes the conversion of PRFAR and glutamine to IGP, AICAR and glutamate. The HisH subunit catalyzes the hydrolysis of glutamine to glutamate and ammonia as part of the synthesis of IGP and AICAR. The resulting ammonia molecule is channeled to the active site of HisF.</text>
</comment>
<comment type="catalytic activity">
    <reaction evidence="1">
        <text>5-[(5-phospho-1-deoxy-D-ribulos-1-ylimino)methylamino]-1-(5-phospho-beta-D-ribosyl)imidazole-4-carboxamide + L-glutamine = D-erythro-1-(imidazol-4-yl)glycerol 3-phosphate + 5-amino-1-(5-phospho-beta-D-ribosyl)imidazole-4-carboxamide + L-glutamate + H(+)</text>
        <dbReference type="Rhea" id="RHEA:24793"/>
        <dbReference type="ChEBI" id="CHEBI:15378"/>
        <dbReference type="ChEBI" id="CHEBI:29985"/>
        <dbReference type="ChEBI" id="CHEBI:58278"/>
        <dbReference type="ChEBI" id="CHEBI:58359"/>
        <dbReference type="ChEBI" id="CHEBI:58475"/>
        <dbReference type="ChEBI" id="CHEBI:58525"/>
        <dbReference type="EC" id="4.3.2.10"/>
    </reaction>
</comment>
<comment type="catalytic activity">
    <reaction evidence="1">
        <text>L-glutamine + H2O = L-glutamate + NH4(+)</text>
        <dbReference type="Rhea" id="RHEA:15889"/>
        <dbReference type="ChEBI" id="CHEBI:15377"/>
        <dbReference type="ChEBI" id="CHEBI:28938"/>
        <dbReference type="ChEBI" id="CHEBI:29985"/>
        <dbReference type="ChEBI" id="CHEBI:58359"/>
        <dbReference type="EC" id="3.5.1.2"/>
    </reaction>
</comment>
<comment type="pathway">
    <text evidence="1">Amino-acid biosynthesis; L-histidine biosynthesis; L-histidine from 5-phospho-alpha-D-ribose 1-diphosphate: step 5/9.</text>
</comment>
<comment type="subunit">
    <text evidence="1">Heterodimer of HisH and HisF.</text>
</comment>
<comment type="subcellular location">
    <subcellularLocation>
        <location evidence="1">Cytoplasm</location>
    </subcellularLocation>
</comment>
<protein>
    <recommendedName>
        <fullName evidence="1">Imidazole glycerol phosphate synthase subunit HisH</fullName>
        <ecNumber evidence="1">4.3.2.10</ecNumber>
    </recommendedName>
    <alternativeName>
        <fullName evidence="1">IGP synthase glutaminase subunit</fullName>
        <ecNumber evidence="1">3.5.1.2</ecNumber>
    </alternativeName>
    <alternativeName>
        <fullName evidence="1">IGP synthase subunit HisH</fullName>
    </alternativeName>
    <alternativeName>
        <fullName evidence="1">ImGP synthase subunit HisH</fullName>
        <shortName evidence="1">IGPS subunit HisH</shortName>
    </alternativeName>
</protein>
<evidence type="ECO:0000255" key="1">
    <source>
        <dbReference type="HAMAP-Rule" id="MF_00278"/>
    </source>
</evidence>
<gene>
    <name evidence="1" type="primary">hisH</name>
    <name type="ordered locus">XOO2122</name>
</gene>